<gene>
    <name evidence="1" type="primary">ruvC</name>
    <name type="ordered locus">COXBURSA331_A1753</name>
</gene>
<name>RUVC_COXBR</name>
<dbReference type="EC" id="3.1.21.10" evidence="1"/>
<dbReference type="EMBL" id="CP000890">
    <property type="protein sequence ID" value="ABX78106.1"/>
    <property type="molecule type" value="Genomic_DNA"/>
</dbReference>
<dbReference type="RefSeq" id="WP_010958304.1">
    <property type="nucleotide sequence ID" value="NC_010117.1"/>
</dbReference>
<dbReference type="SMR" id="A9N9A1"/>
<dbReference type="KEGG" id="cbs:COXBURSA331_A1753"/>
<dbReference type="HOGENOM" id="CLU_091257_2_1_6"/>
<dbReference type="GO" id="GO:0005737">
    <property type="term" value="C:cytoplasm"/>
    <property type="evidence" value="ECO:0007669"/>
    <property type="project" value="UniProtKB-SubCell"/>
</dbReference>
<dbReference type="GO" id="GO:0048476">
    <property type="term" value="C:Holliday junction resolvase complex"/>
    <property type="evidence" value="ECO:0007669"/>
    <property type="project" value="UniProtKB-UniRule"/>
</dbReference>
<dbReference type="GO" id="GO:0008821">
    <property type="term" value="F:crossover junction DNA endonuclease activity"/>
    <property type="evidence" value="ECO:0007669"/>
    <property type="project" value="UniProtKB-UniRule"/>
</dbReference>
<dbReference type="GO" id="GO:0003677">
    <property type="term" value="F:DNA binding"/>
    <property type="evidence" value="ECO:0007669"/>
    <property type="project" value="UniProtKB-KW"/>
</dbReference>
<dbReference type="GO" id="GO:0000287">
    <property type="term" value="F:magnesium ion binding"/>
    <property type="evidence" value="ECO:0007669"/>
    <property type="project" value="UniProtKB-UniRule"/>
</dbReference>
<dbReference type="GO" id="GO:0006310">
    <property type="term" value="P:DNA recombination"/>
    <property type="evidence" value="ECO:0007669"/>
    <property type="project" value="UniProtKB-UniRule"/>
</dbReference>
<dbReference type="GO" id="GO:0006281">
    <property type="term" value="P:DNA repair"/>
    <property type="evidence" value="ECO:0007669"/>
    <property type="project" value="UniProtKB-UniRule"/>
</dbReference>
<dbReference type="CDD" id="cd16962">
    <property type="entry name" value="RuvC"/>
    <property type="match status" value="1"/>
</dbReference>
<dbReference type="FunFam" id="3.30.420.10:FF:000002">
    <property type="entry name" value="Crossover junction endodeoxyribonuclease RuvC"/>
    <property type="match status" value="1"/>
</dbReference>
<dbReference type="Gene3D" id="3.30.420.10">
    <property type="entry name" value="Ribonuclease H-like superfamily/Ribonuclease H"/>
    <property type="match status" value="1"/>
</dbReference>
<dbReference type="HAMAP" id="MF_00034">
    <property type="entry name" value="RuvC"/>
    <property type="match status" value="1"/>
</dbReference>
<dbReference type="InterPro" id="IPR012337">
    <property type="entry name" value="RNaseH-like_sf"/>
</dbReference>
<dbReference type="InterPro" id="IPR036397">
    <property type="entry name" value="RNaseH_sf"/>
</dbReference>
<dbReference type="InterPro" id="IPR020563">
    <property type="entry name" value="X-over_junc_endoDNase_Mg_BS"/>
</dbReference>
<dbReference type="InterPro" id="IPR002176">
    <property type="entry name" value="X-over_junc_endoDNase_RuvC"/>
</dbReference>
<dbReference type="NCBIfam" id="TIGR00228">
    <property type="entry name" value="ruvC"/>
    <property type="match status" value="1"/>
</dbReference>
<dbReference type="PANTHER" id="PTHR30194">
    <property type="entry name" value="CROSSOVER JUNCTION ENDODEOXYRIBONUCLEASE RUVC"/>
    <property type="match status" value="1"/>
</dbReference>
<dbReference type="PANTHER" id="PTHR30194:SF3">
    <property type="entry name" value="CROSSOVER JUNCTION ENDODEOXYRIBONUCLEASE RUVC"/>
    <property type="match status" value="1"/>
</dbReference>
<dbReference type="Pfam" id="PF02075">
    <property type="entry name" value="RuvC"/>
    <property type="match status" value="1"/>
</dbReference>
<dbReference type="PRINTS" id="PR00696">
    <property type="entry name" value="RSOLVASERUVC"/>
</dbReference>
<dbReference type="SUPFAM" id="SSF53098">
    <property type="entry name" value="Ribonuclease H-like"/>
    <property type="match status" value="1"/>
</dbReference>
<dbReference type="PROSITE" id="PS01321">
    <property type="entry name" value="RUVC"/>
    <property type="match status" value="1"/>
</dbReference>
<comment type="function">
    <text evidence="1">The RuvA-RuvB-RuvC complex processes Holliday junction (HJ) DNA during genetic recombination and DNA repair. Endonuclease that resolves HJ intermediates. Cleaves cruciform DNA by making single-stranded nicks across the HJ at symmetrical positions within the homologous arms, yielding a 5'-phosphate and a 3'-hydroxyl group; requires a central core of homology in the junction. The consensus cleavage sequence is 5'-(A/T)TT(C/G)-3'. Cleavage occurs on the 3'-side of the TT dinucleotide at the point of strand exchange. HJ branch migration catalyzed by RuvA-RuvB allows RuvC to scan DNA until it finds its consensus sequence, where it cleaves and resolves the cruciform DNA.</text>
</comment>
<comment type="catalytic activity">
    <reaction evidence="1">
        <text>Endonucleolytic cleavage at a junction such as a reciprocal single-stranded crossover between two homologous DNA duplexes (Holliday junction).</text>
        <dbReference type="EC" id="3.1.21.10"/>
    </reaction>
</comment>
<comment type="cofactor">
    <cofactor evidence="1">
        <name>Mg(2+)</name>
        <dbReference type="ChEBI" id="CHEBI:18420"/>
    </cofactor>
    <text evidence="1">Binds 2 Mg(2+) ion per subunit.</text>
</comment>
<comment type="subunit">
    <text evidence="1">Homodimer which binds Holliday junction (HJ) DNA. The HJ becomes 2-fold symmetrical on binding to RuvC with unstacked arms; it has a different conformation from HJ DNA in complex with RuvA. In the full resolvosome a probable DNA-RuvA(4)-RuvB(12)-RuvC(2) complex forms which resolves the HJ.</text>
</comment>
<comment type="subcellular location">
    <subcellularLocation>
        <location evidence="1">Cytoplasm</location>
    </subcellularLocation>
</comment>
<comment type="similarity">
    <text evidence="1">Belongs to the RuvC family.</text>
</comment>
<accession>A9N9A1</accession>
<keyword id="KW-0963">Cytoplasm</keyword>
<keyword id="KW-0227">DNA damage</keyword>
<keyword id="KW-0233">DNA recombination</keyword>
<keyword id="KW-0234">DNA repair</keyword>
<keyword id="KW-0238">DNA-binding</keyword>
<keyword id="KW-0255">Endonuclease</keyword>
<keyword id="KW-0378">Hydrolase</keyword>
<keyword id="KW-0460">Magnesium</keyword>
<keyword id="KW-0479">Metal-binding</keyword>
<keyword id="KW-0540">Nuclease</keyword>
<evidence type="ECO:0000255" key="1">
    <source>
        <dbReference type="HAMAP-Rule" id="MF_00034"/>
    </source>
</evidence>
<proteinExistence type="inferred from homology"/>
<feature type="chain" id="PRO_1000074483" description="Crossover junction endodeoxyribonuclease RuvC">
    <location>
        <begin position="1"/>
        <end position="172"/>
    </location>
</feature>
<feature type="active site" evidence="1">
    <location>
        <position position="12"/>
    </location>
</feature>
<feature type="active site" evidence="1">
    <location>
        <position position="71"/>
    </location>
</feature>
<feature type="active site" evidence="1">
    <location>
        <position position="143"/>
    </location>
</feature>
<feature type="binding site" evidence="1">
    <location>
        <position position="12"/>
    </location>
    <ligand>
        <name>Mg(2+)</name>
        <dbReference type="ChEBI" id="CHEBI:18420"/>
        <label>1</label>
    </ligand>
</feature>
<feature type="binding site" evidence="1">
    <location>
        <position position="71"/>
    </location>
    <ligand>
        <name>Mg(2+)</name>
        <dbReference type="ChEBI" id="CHEBI:18420"/>
        <label>2</label>
    </ligand>
</feature>
<feature type="binding site" evidence="1">
    <location>
        <position position="143"/>
    </location>
    <ligand>
        <name>Mg(2+)</name>
        <dbReference type="ChEBI" id="CHEBI:18420"/>
        <label>1</label>
    </ligand>
</feature>
<protein>
    <recommendedName>
        <fullName evidence="1">Crossover junction endodeoxyribonuclease RuvC</fullName>
        <ecNumber evidence="1">3.1.21.10</ecNumber>
    </recommendedName>
    <alternativeName>
        <fullName evidence="1">Holliday junction nuclease RuvC</fullName>
    </alternativeName>
    <alternativeName>
        <fullName evidence="1">Holliday junction resolvase RuvC</fullName>
    </alternativeName>
</protein>
<reference key="1">
    <citation type="submission" date="2007-11" db="EMBL/GenBank/DDBJ databases">
        <title>Genome sequencing of phylogenetically and phenotypically diverse Coxiella burnetii isolates.</title>
        <authorList>
            <person name="Seshadri R."/>
            <person name="Samuel J.E."/>
        </authorList>
    </citation>
    <scope>NUCLEOTIDE SEQUENCE [LARGE SCALE GENOMIC DNA]</scope>
    <source>
        <strain>RSA 331 / Henzerling II</strain>
    </source>
</reference>
<organism>
    <name type="scientific">Coxiella burnetii (strain RSA 331 / Henzerling II)</name>
    <dbReference type="NCBI Taxonomy" id="360115"/>
    <lineage>
        <taxon>Bacteria</taxon>
        <taxon>Pseudomonadati</taxon>
        <taxon>Pseudomonadota</taxon>
        <taxon>Gammaproteobacteria</taxon>
        <taxon>Legionellales</taxon>
        <taxon>Coxiellaceae</taxon>
        <taxon>Coxiella</taxon>
    </lineage>
</organism>
<sequence>MDNPRRIIIGIDPGSRITGYGIIWSQGSKQGCIAFGQIKTDNDSLNFRLHQIERELRDLILIHRPHEAAIEQVFTFHNHQSALKLGQARGAALVATAACALSVAEYSARQIKQAVVGYGAATKAQVQHMVHLLLQLEKAPPADAADALAIALCHATSSRLSEKLMQAKGTLT</sequence>